<reference evidence="7" key="1">
    <citation type="journal article" date="2002" name="Mol. Biol. Evol.">
        <title>Hyaloraphidium curvatum: a linear mitochondrial genome, tRNA editing, and an evolutionary link to lower fungi.</title>
        <authorList>
            <person name="Forget L."/>
            <person name="Ustinova J."/>
            <person name="Wang Z."/>
            <person name="Huss V.A.R."/>
            <person name="Lang B.F."/>
        </authorList>
    </citation>
    <scope>NUCLEOTIDE SEQUENCE [LARGE SCALE GENOMIC DNA]</scope>
    <source>
        <strain evidence="5">SAG 235-1 / CCAP 235/1</strain>
    </source>
</reference>
<evidence type="ECO:0000250" key="1"/>
<evidence type="ECO:0000250" key="2">
    <source>
        <dbReference type="UniProtKB" id="P03892"/>
    </source>
</evidence>
<evidence type="ECO:0000250" key="3">
    <source>
        <dbReference type="UniProtKB" id="Q9B6C8"/>
    </source>
</evidence>
<evidence type="ECO:0000255" key="4"/>
<evidence type="ECO:0000269" key="5">
    <source>
    </source>
</evidence>
<evidence type="ECO:0000305" key="6"/>
<evidence type="ECO:0000312" key="7">
    <source>
        <dbReference type="EMBL" id="AAK83420.1"/>
    </source>
</evidence>
<keyword id="KW-0249">Electron transport</keyword>
<keyword id="KW-0472">Membrane</keyword>
<keyword id="KW-0496">Mitochondrion</keyword>
<keyword id="KW-0999">Mitochondrion inner membrane</keyword>
<keyword id="KW-0520">NAD</keyword>
<keyword id="KW-0679">Respiratory chain</keyword>
<keyword id="KW-1278">Translocase</keyword>
<keyword id="KW-0812">Transmembrane</keyword>
<keyword id="KW-1133">Transmembrane helix</keyword>
<keyword id="KW-0813">Transport</keyword>
<keyword id="KW-0830">Ubiquinone</keyword>
<name>NU2M_HYACU</name>
<protein>
    <recommendedName>
        <fullName evidence="3">NADH-ubiquinone oxidoreductase chain 2</fullName>
        <ecNumber evidence="7">7.1.1.2</ecNumber>
    </recommendedName>
    <alternativeName>
        <fullName evidence="7">NADH dehydrogenase subunit 2</fullName>
    </alternativeName>
</protein>
<feature type="chain" id="PRO_0000413002" description="NADH-ubiquinone oxidoreductase chain 2">
    <location>
        <begin position="1"/>
        <end position="428"/>
    </location>
</feature>
<feature type="transmembrane region" description="Helical" evidence="4">
    <location>
        <begin position="22"/>
        <end position="42"/>
    </location>
</feature>
<feature type="transmembrane region" description="Helical" evidence="4">
    <location>
        <begin position="59"/>
        <end position="79"/>
    </location>
</feature>
<feature type="transmembrane region" description="Helical" evidence="4">
    <location>
        <begin position="84"/>
        <end position="104"/>
    </location>
</feature>
<feature type="transmembrane region" description="Helical" evidence="4">
    <location>
        <begin position="108"/>
        <end position="128"/>
    </location>
</feature>
<feature type="transmembrane region" description="Helical" evidence="4">
    <location>
        <begin position="140"/>
        <end position="160"/>
    </location>
</feature>
<feature type="transmembrane region" description="Helical" evidence="4">
    <location>
        <begin position="185"/>
        <end position="205"/>
    </location>
</feature>
<feature type="transmembrane region" description="Helical" evidence="4">
    <location>
        <begin position="218"/>
        <end position="238"/>
    </location>
</feature>
<feature type="transmembrane region" description="Helical" evidence="4">
    <location>
        <begin position="241"/>
        <end position="261"/>
    </location>
</feature>
<feature type="transmembrane region" description="Helical" evidence="4">
    <location>
        <begin position="269"/>
        <end position="289"/>
    </location>
</feature>
<feature type="transmembrane region" description="Helical" evidence="4">
    <location>
        <begin position="292"/>
        <end position="312"/>
    </location>
</feature>
<feature type="transmembrane region" description="Helical" evidence="4">
    <location>
        <begin position="332"/>
        <end position="352"/>
    </location>
</feature>
<feature type="transmembrane region" description="Helical" evidence="4">
    <location>
        <begin position="356"/>
        <end position="376"/>
    </location>
</feature>
<feature type="transmembrane region" description="Helical" evidence="4">
    <location>
        <begin position="384"/>
        <end position="404"/>
    </location>
</feature>
<feature type="transmembrane region" description="Helical" evidence="4">
    <location>
        <begin position="408"/>
        <end position="428"/>
    </location>
</feature>
<dbReference type="EC" id="7.1.1.2" evidence="7"/>
<dbReference type="EMBL" id="AF402142">
    <property type="protein sequence ID" value="AAK83420.1"/>
    <property type="molecule type" value="Genomic_DNA"/>
</dbReference>
<dbReference type="RefSeq" id="NP_150098.1">
    <property type="nucleotide sequence ID" value="NC_003048.1"/>
</dbReference>
<dbReference type="SMR" id="Q950U6"/>
<dbReference type="GeneID" id="803643"/>
<dbReference type="GO" id="GO:0005743">
    <property type="term" value="C:mitochondrial inner membrane"/>
    <property type="evidence" value="ECO:0007669"/>
    <property type="project" value="UniProtKB-SubCell"/>
</dbReference>
<dbReference type="GO" id="GO:0008137">
    <property type="term" value="F:NADH dehydrogenase (ubiquinone) activity"/>
    <property type="evidence" value="ECO:0007669"/>
    <property type="project" value="UniProtKB-EC"/>
</dbReference>
<dbReference type="InterPro" id="IPR001750">
    <property type="entry name" value="ND/Mrp_TM"/>
</dbReference>
<dbReference type="PANTHER" id="PTHR22773">
    <property type="entry name" value="NADH DEHYDROGENASE"/>
    <property type="match status" value="1"/>
</dbReference>
<dbReference type="Pfam" id="PF00361">
    <property type="entry name" value="Proton_antipo_M"/>
    <property type="match status" value="1"/>
</dbReference>
<proteinExistence type="inferred from homology"/>
<geneLocation type="mitochondrion" evidence="7"/>
<sequence length="428" mass="47550">MLYLLLTTTLLMMTWNRYAGRIAFLSLLGYFVIMLNIWLHFGSLSESVTLLFGGGLVRLDESILSALLFILFLGLVIMNRTGDLGWEFHLLLMGGLTGAIYMLTAYDLLLMVVGFEFLNLSTYLILSLYRGTETATLKYLLSSAFYTTLLLLAISFFYGLTGSTGYDALFVQMNYLGGETFLPQILLLGTIAFKLGLVPAHLWVPDVYDGLPMTLLSWMGSVPKAAVLLWLPTIYPLLNQLAPFLLVLSALSFLLSAVLMAAQYKMKRFLAYSAIGHLGFVVAAFAIGDYHAYGYYIFIYMIATLAQFVLLSELPQTELMKQTSVLKDHRALGLGFLVIVLTMASLPPFAGFYAKLLVLFGFLEIGYGIFAVLLILASLRSAAYYLKWIQTTFFSVVPFASAPIQVQYPNLVSFLVTLILPSTLLLLL</sequence>
<comment type="function">
    <text evidence="1 6">Core subunit of the mitochondrial membrane respiratory chain NADH dehydrogenase (Complex I) that is believed to belong to the minimal assembly required for catalysis. Complex I functions in the transfer of electrons from NADH to the respiratory chain. The immediate electron acceptor for the enzyme is believed to be ubiquinone (By similarity).</text>
</comment>
<comment type="catalytic activity">
    <reaction>
        <text>a ubiquinone + NADH + 5 H(+)(in) = a ubiquinol + NAD(+) + 4 H(+)(out)</text>
        <dbReference type="Rhea" id="RHEA:29091"/>
        <dbReference type="Rhea" id="RHEA-COMP:9565"/>
        <dbReference type="Rhea" id="RHEA-COMP:9566"/>
        <dbReference type="ChEBI" id="CHEBI:15378"/>
        <dbReference type="ChEBI" id="CHEBI:16389"/>
        <dbReference type="ChEBI" id="CHEBI:17976"/>
        <dbReference type="ChEBI" id="CHEBI:57540"/>
        <dbReference type="ChEBI" id="CHEBI:57945"/>
        <dbReference type="EC" id="7.1.1.2"/>
    </reaction>
</comment>
<comment type="subcellular location">
    <subcellularLocation>
        <location evidence="2">Mitochondrion inner membrane</location>
        <topology evidence="2">Multi-pass membrane protein</topology>
    </subcellularLocation>
</comment>
<comment type="similarity">
    <text evidence="4">Belongs to the complex I subunit 2 family.</text>
</comment>
<accession>Q950U6</accession>
<organism>
    <name type="scientific">Hyaloraphidium curvatum</name>
    <name type="common">Lower fungus</name>
    <dbReference type="NCBI Taxonomy" id="82268"/>
    <lineage>
        <taxon>Eukaryota</taxon>
        <taxon>Fungi</taxon>
        <taxon>Fungi incertae sedis</taxon>
        <taxon>Chytridiomycota</taxon>
        <taxon>Chytridiomycota incertae sedis</taxon>
        <taxon>Monoblepharidomycetes</taxon>
        <taxon>Monoblepharidales</taxon>
        <taxon>Monoblepharidales incertae sedis</taxon>
        <taxon>Hyaloraphidium</taxon>
    </lineage>
</organism>
<gene>
    <name evidence="7" type="primary">NAD2</name>
</gene>